<feature type="chain" id="PRO_0000458830" description="N-acetyl-S-(2-succino)cysteine lyase">
    <location>
        <begin position="1"/>
        <end position="455"/>
    </location>
</feature>
<feature type="active site" description="Proton donor/acceptor" evidence="1">
    <location>
        <position position="154"/>
    </location>
</feature>
<feature type="active site" description="Proton donor/acceptor" evidence="1">
    <location>
        <position position="277"/>
    </location>
</feature>
<feature type="binding site" evidence="1">
    <location>
        <begin position="106"/>
        <end position="107"/>
    </location>
    <ligand>
        <name>fumarate</name>
        <dbReference type="ChEBI" id="CHEBI:29806"/>
    </ligand>
</feature>
<feature type="binding site" evidence="1">
    <location>
        <position position="233"/>
    </location>
    <ligand>
        <name>fumarate</name>
        <dbReference type="ChEBI" id="CHEBI:29806"/>
    </ligand>
</feature>
<feature type="binding site" evidence="1">
    <location>
        <position position="278"/>
    </location>
    <ligand>
        <name>fumarate</name>
        <dbReference type="ChEBI" id="CHEBI:29806"/>
    </ligand>
</feature>
<feature type="binding site" evidence="1">
    <location>
        <begin position="283"/>
        <end position="285"/>
    </location>
    <ligand>
        <name>fumarate</name>
        <dbReference type="ChEBI" id="CHEBI:29806"/>
    </ligand>
</feature>
<proteinExistence type="evidence at protein level"/>
<accession>E6LDH5</accession>
<name>2SL_ENTI1</name>
<organism evidence="6 7">
    <name type="scientific">Enterococcus italicus (strain DSM 15952 / CCUG 50447 / LMG 22039 / TP 1.5)</name>
    <dbReference type="NCBI Taxonomy" id="888064"/>
    <lineage>
        <taxon>Bacteria</taxon>
        <taxon>Bacillati</taxon>
        <taxon>Bacillota</taxon>
        <taxon>Bacilli</taxon>
        <taxon>Lactobacillales</taxon>
        <taxon>Enterococcaceae</taxon>
        <taxon>Enterococcus</taxon>
    </lineage>
</organism>
<gene>
    <name evidence="6" type="primary">purB</name>
    <name evidence="6" type="ORF">HMPREF9088_0415</name>
</gene>
<dbReference type="EC" id="4.3.2.-" evidence="2"/>
<dbReference type="EMBL" id="AEPV01000013">
    <property type="protein sequence ID" value="EFU74751.1"/>
    <property type="molecule type" value="Genomic_DNA"/>
</dbReference>
<dbReference type="RefSeq" id="WP_007207436.1">
    <property type="nucleotide sequence ID" value="NZ_GL622241.1"/>
</dbReference>
<dbReference type="SMR" id="E6LDH5"/>
<dbReference type="STRING" id="888064.HMPREF9088_0415"/>
<dbReference type="PATRIC" id="fig|888064.11.peg.1794"/>
<dbReference type="eggNOG" id="COG0015">
    <property type="taxonomic scope" value="Bacteria"/>
</dbReference>
<dbReference type="HOGENOM" id="CLU_030949_0_1_9"/>
<dbReference type="OrthoDB" id="9768878at2"/>
<dbReference type="UniPathway" id="UPA00136"/>
<dbReference type="Proteomes" id="UP000010296">
    <property type="component" value="Unassembled WGS sequence"/>
</dbReference>
<dbReference type="GO" id="GO:0005829">
    <property type="term" value="C:cytosol"/>
    <property type="evidence" value="ECO:0007669"/>
    <property type="project" value="TreeGrafter"/>
</dbReference>
<dbReference type="GO" id="GO:0070626">
    <property type="term" value="F:(S)-2-(5-amino-1-(5-phospho-D-ribosyl)imidazole-4-carboxamido) succinate lyase (fumarate-forming) activity"/>
    <property type="evidence" value="ECO:0007669"/>
    <property type="project" value="TreeGrafter"/>
</dbReference>
<dbReference type="GO" id="GO:0004018">
    <property type="term" value="F:N6-(1,2-dicarboxyethyl)AMP AMP-lyase (fumarate-forming) activity"/>
    <property type="evidence" value="ECO:0007669"/>
    <property type="project" value="InterPro"/>
</dbReference>
<dbReference type="GO" id="GO:0044208">
    <property type="term" value="P:'de novo' AMP biosynthetic process"/>
    <property type="evidence" value="ECO:0007669"/>
    <property type="project" value="TreeGrafter"/>
</dbReference>
<dbReference type="GO" id="GO:0019344">
    <property type="term" value="P:cysteine biosynthetic process"/>
    <property type="evidence" value="ECO:0007669"/>
    <property type="project" value="UniProtKB-UniPathway"/>
</dbReference>
<dbReference type="CDD" id="cd01597">
    <property type="entry name" value="pCLME"/>
    <property type="match status" value="1"/>
</dbReference>
<dbReference type="FunFam" id="1.20.200.10:FF:000014">
    <property type="entry name" value="3-carboxy-cis,cis-muconate cycloisomerase"/>
    <property type="match status" value="1"/>
</dbReference>
<dbReference type="Gene3D" id="1.10.40.30">
    <property type="entry name" value="Fumarase/aspartase (C-terminal domain)"/>
    <property type="match status" value="1"/>
</dbReference>
<dbReference type="Gene3D" id="1.20.200.10">
    <property type="entry name" value="Fumarase/aspartase (Central domain)"/>
    <property type="match status" value="1"/>
</dbReference>
<dbReference type="InterPro" id="IPR019468">
    <property type="entry name" value="AdenyloSucc_lyase_C"/>
</dbReference>
<dbReference type="InterPro" id="IPR020557">
    <property type="entry name" value="Fumarate_lyase_CS"/>
</dbReference>
<dbReference type="InterPro" id="IPR000362">
    <property type="entry name" value="Fumarate_lyase_fam"/>
</dbReference>
<dbReference type="InterPro" id="IPR022761">
    <property type="entry name" value="Fumarate_lyase_N"/>
</dbReference>
<dbReference type="InterPro" id="IPR008948">
    <property type="entry name" value="L-Aspartase-like"/>
</dbReference>
<dbReference type="InterPro" id="IPR004769">
    <property type="entry name" value="Pur_lyase"/>
</dbReference>
<dbReference type="NCBIfam" id="TIGR00928">
    <property type="entry name" value="purB"/>
    <property type="match status" value="1"/>
</dbReference>
<dbReference type="PANTHER" id="PTHR43172">
    <property type="entry name" value="ADENYLOSUCCINATE LYASE"/>
    <property type="match status" value="1"/>
</dbReference>
<dbReference type="PANTHER" id="PTHR43172:SF1">
    <property type="entry name" value="ADENYLOSUCCINATE LYASE"/>
    <property type="match status" value="1"/>
</dbReference>
<dbReference type="Pfam" id="PF10397">
    <property type="entry name" value="ADSL_C"/>
    <property type="match status" value="1"/>
</dbReference>
<dbReference type="Pfam" id="PF00206">
    <property type="entry name" value="Lyase_1"/>
    <property type="match status" value="1"/>
</dbReference>
<dbReference type="PRINTS" id="PR00145">
    <property type="entry name" value="ARGSUCLYASE"/>
</dbReference>
<dbReference type="PRINTS" id="PR00149">
    <property type="entry name" value="FUMRATELYASE"/>
</dbReference>
<dbReference type="SMART" id="SM00998">
    <property type="entry name" value="ADSL_C"/>
    <property type="match status" value="1"/>
</dbReference>
<dbReference type="SUPFAM" id="SSF48557">
    <property type="entry name" value="L-aspartase-like"/>
    <property type="match status" value="1"/>
</dbReference>
<dbReference type="PROSITE" id="PS00163">
    <property type="entry name" value="FUMARATE_LYASES"/>
    <property type="match status" value="1"/>
</dbReference>
<evidence type="ECO:0000250" key="1">
    <source>
        <dbReference type="UniProtKB" id="P0AB89"/>
    </source>
</evidence>
<evidence type="ECO:0000269" key="2">
    <source>
    </source>
</evidence>
<evidence type="ECO:0000303" key="3">
    <source>
    </source>
</evidence>
<evidence type="ECO:0000305" key="4"/>
<evidence type="ECO:0000305" key="5">
    <source>
    </source>
</evidence>
<evidence type="ECO:0000312" key="6">
    <source>
        <dbReference type="EMBL" id="EFU74751.1"/>
    </source>
</evidence>
<evidence type="ECO:0000312" key="7">
    <source>
        <dbReference type="Proteomes" id="UP000010296"/>
    </source>
</evidence>
<protein>
    <recommendedName>
        <fullName evidence="5">N-acetyl-S-(2-succino)cysteine lyase</fullName>
        <ecNumber evidence="2">4.3.2.-</ecNumber>
    </recommendedName>
    <alternativeName>
        <fullName evidence="3">S-(2-succino) lyase</fullName>
        <shortName evidence="3">2SL</shortName>
    </alternativeName>
</protein>
<sequence length="455" mass="50424">MGSHVIDLVMLRNNFSTAEMRAIWNDEARITKQLAVEAALAQAEGELGLIPKEAAKKIAKVAKETTFDIAAIAEQVAVLKHSLMPTINALQAAAGDEGEFVHYGATTQDIVDTGTVLQLKDAYNIVLRDTQVVFEKLAKLAKHYQNVPMVGRTHGMQALPITFGYKLAIWVDEFGRHLERLHEIKERVFTGNINGAVGSYASFGPKGSEVERQTLAILDLNAPTIGWQSSRDRFSEYASVIGLISATLGKIGNEFYNLMRTEINEIEEPFSKGKIGSSTMPHKRNPAAFEGLASLTPPVLKSVALIHESMHVEHERDAMSWRQEWVALPEMNAYVSAQLAILANVLDGLQVKEAVMARNLEKQHGLLLSEKVMFEVGQKLGKQTAHHLVYECAMTSFEEERPFIDTLFEQAAIADTYARAEVEQWLDPTQYTGLCADKVDEVLAAWQTKGFLKEG</sequence>
<reference key="1">
    <citation type="submission" date="2010-12" db="EMBL/GenBank/DDBJ databases">
        <authorList>
            <person name="Muzny D."/>
            <person name="Qin X."/>
            <person name="Deng J."/>
            <person name="Jiang H."/>
            <person name="Liu Y."/>
            <person name="Qu J."/>
            <person name="Song X.-Z."/>
            <person name="Zhang L."/>
            <person name="Thornton R."/>
            <person name="Coyle M."/>
            <person name="Francisco L."/>
            <person name="Jackson L."/>
            <person name="Javaid M."/>
            <person name="Korchina V."/>
            <person name="Kovar C."/>
            <person name="Mata R."/>
            <person name="Mathew T."/>
            <person name="Ngo R."/>
            <person name="Nguyen L."/>
            <person name="Nguyen N."/>
            <person name="Okwuonu G."/>
            <person name="Ongeri F."/>
            <person name="Pham C."/>
            <person name="Simmons D."/>
            <person name="Wilczek-Boney K."/>
            <person name="Hale W."/>
            <person name="Jakkamsetti A."/>
            <person name="Pham P."/>
            <person name="Ruth R."/>
            <person name="San Lucas F."/>
            <person name="Warren J."/>
            <person name="Zhang J."/>
            <person name="Zhao Z."/>
            <person name="Zhou C."/>
            <person name="Zhu D."/>
            <person name="Lee S."/>
            <person name="Bess C."/>
            <person name="Blankenburg K."/>
            <person name="Forbes L."/>
            <person name="Fu Q."/>
            <person name="Gubbala S."/>
            <person name="Hirani K."/>
            <person name="Jayaseelan J.C."/>
            <person name="Lara F."/>
            <person name="Munidasa M."/>
            <person name="Palculict T."/>
            <person name="Patil S."/>
            <person name="Pu L.-L."/>
            <person name="Saada N."/>
            <person name="Tang L."/>
            <person name="Weissenberger G."/>
            <person name="Zhu Y."/>
            <person name="Hemphill L."/>
            <person name="Shang Y."/>
            <person name="Youmans B."/>
            <person name="Ayvaz T."/>
            <person name="Ross M."/>
            <person name="Santibanez J."/>
            <person name="Aqrawi P."/>
            <person name="Gross S."/>
            <person name="Joshi V."/>
            <person name="Fowler G."/>
            <person name="Nazareth L."/>
            <person name="Reid J."/>
            <person name="Worley K."/>
            <person name="Petrosino J."/>
            <person name="Highlander S."/>
            <person name="Gibbs R."/>
        </authorList>
    </citation>
    <scope>NUCLEOTIDE SEQUENCE [LARGE SCALE GENOMIC DNA]</scope>
    <source>
        <strain evidence="7">DSM 15952 / CCUG 50447 / LMG 22039 / TP 1.5</strain>
    </source>
</reference>
<reference key="2">
    <citation type="journal article" date="2022" name="J. Biol. Chem.">
        <title>Identification of a S-(2-succino)cysteine breakdown pathway that uses a novel S-(2-succino) lyase.</title>
        <authorList>
            <person name="Hillmann K.B."/>
            <person name="Goethel M.E."/>
            <person name="Erickson N.A."/>
            <person name="Niehaus T.D."/>
        </authorList>
    </citation>
    <scope>FUNCTION</scope>
    <scope>CATALYTIC ACTIVITY</scope>
    <scope>BIOPHYSICOCHEMICAL PROPERTIES</scope>
    <scope>PATHWAY</scope>
</reference>
<keyword id="KW-0028">Amino-acid biosynthesis</keyword>
<keyword id="KW-0198">Cysteine biosynthesis</keyword>
<keyword id="KW-0456">Lyase</keyword>
<keyword id="KW-1185">Reference proteome</keyword>
<comment type="function">
    <text evidence="2">Catalyzes the cleavage of N-acetyl-S-(2-succino)cysteine into fumarate and N-acetylcysteine. Is involved in a S-(2-succino)cysteine (2SC) degradation pathway that allows the bacterium to recover cysteine from 2SC and to detoxify 2SC that may be a toxic metabolite. Can also perform the reverse reaction in vitro, and has minor activity against 2SC and other small molecule thiols.</text>
</comment>
<comment type="catalytic activity">
    <reaction evidence="2">
        <text>N-acetyl-S-(2-succino)-L-cysteine = N-acetyl-L-cysteine + fumarate</text>
        <dbReference type="Rhea" id="RHEA:76543"/>
        <dbReference type="ChEBI" id="CHEBI:29806"/>
        <dbReference type="ChEBI" id="CHEBI:78236"/>
        <dbReference type="ChEBI" id="CHEBI:144658"/>
    </reaction>
    <physiologicalReaction direction="left-to-right" evidence="5">
        <dbReference type="Rhea" id="RHEA:76544"/>
    </physiologicalReaction>
</comment>
<comment type="biophysicochemical properties">
    <kinetics>
        <KM evidence="2">1.4 mM for N-acetyl-S-(2-succino)-L-cysteine</KM>
        <KM evidence="2">0.39 mM for N-acetyl-L-cysteine</KM>
        <KM evidence="2">0.23 mM for fumarate</KM>
        <KM evidence="2">10.7 mM for S-(2-succino)-L-cysteine</KM>
        <KM evidence="2">17.8 mM for L-cysteine</KM>
        <Vmax evidence="2">2.42 umol/min/mg enzyme for the breakdown of N-acetyl-S-(2-succino)-L-cysteine to fumarate and N-acetyl-L-cysteine</Vmax>
        <Vmax evidence="2">105.0 umol/min/mg enzyme for the synthesis of N-acetyl-S-(2-succino)-L-cysteine from fumarate and N-acetyl-L-cysteine</Vmax>
        <Vmax evidence="2">0.058 umol/min/mg enzyme for the breakdown of S-(2-succino)-L-cysteine to fumarate and L-cysteine</Vmax>
        <Vmax evidence="2">11.9 umol/min/mg enzyme for the synthesis of S-(2-succino)-L-cysteine from fumarate and L-cysteine</Vmax>
        <text evidence="2">kcat is 2.12 sec(-1) for the breakdown of N-acetyl-S-(2-succino)-L-cysteine to fumarate and N-acetyl-L-cysteine. kcat is 92.1 sec(-1) for the synthesis of N-acetyl-S-(2-succino)-L-cysteine from fumarate and N-acetyl-L-cysteine. kcat is 0.051 sec(-1) for the breakdown of S-(2-succino)-L-cysteine to fumarate and L-cysteine. kcat is 10.4 sec(-1) for the synthesis of S-(2-succino)-L-cysteine from fumarate and L-cysteine.</text>
    </kinetics>
</comment>
<comment type="pathway">
    <text evidence="5">Amino-acid biosynthesis; L-cysteine biosynthesis.</text>
</comment>
<comment type="miscellaneous">
    <text evidence="2">Is able to functionally complement a B.subtilis yxeK mutant in the ability to use 2SC as a sulfur source for growth.</text>
</comment>
<comment type="similarity">
    <text evidence="4">Belongs to the lyase 1 family.</text>
</comment>